<dbReference type="EC" id="1.8.1.-"/>
<dbReference type="EMBL" id="AL513382">
    <property type="protein sequence ID" value="CAD02753.1"/>
    <property type="molecule type" value="Genomic_DNA"/>
</dbReference>
<dbReference type="EMBL" id="AE014613">
    <property type="protein sequence ID" value="AAO68030.1"/>
    <property type="molecule type" value="Genomic_DNA"/>
</dbReference>
<dbReference type="RefSeq" id="NP_457081.1">
    <property type="nucleotide sequence ID" value="NC_003198.1"/>
</dbReference>
<dbReference type="RefSeq" id="WP_000020685.1">
    <property type="nucleotide sequence ID" value="NZ_WSUR01000007.1"/>
</dbReference>
<dbReference type="SMR" id="P0A1Y3"/>
<dbReference type="STRING" id="220341.gene:17586687"/>
<dbReference type="KEGG" id="stt:t0306"/>
<dbReference type="KEGG" id="sty:STY2796"/>
<dbReference type="PATRIC" id="fig|220341.7.peg.2842"/>
<dbReference type="eggNOG" id="COG2221">
    <property type="taxonomic scope" value="Bacteria"/>
</dbReference>
<dbReference type="HOGENOM" id="CLU_072599_1_0_6"/>
<dbReference type="OMA" id="GGCEYNP"/>
<dbReference type="OrthoDB" id="9810688at2"/>
<dbReference type="UniPathway" id="UPA00370"/>
<dbReference type="Proteomes" id="UP000000541">
    <property type="component" value="Chromosome"/>
</dbReference>
<dbReference type="Proteomes" id="UP000002670">
    <property type="component" value="Chromosome"/>
</dbReference>
<dbReference type="GO" id="GO:0005737">
    <property type="term" value="C:cytoplasm"/>
    <property type="evidence" value="ECO:0007669"/>
    <property type="project" value="UniProtKB-SubCell"/>
</dbReference>
<dbReference type="GO" id="GO:0009337">
    <property type="term" value="C:sulfite reductase complex (NADPH)"/>
    <property type="evidence" value="ECO:0007669"/>
    <property type="project" value="TreeGrafter"/>
</dbReference>
<dbReference type="GO" id="GO:0051539">
    <property type="term" value="F:4 iron, 4 sulfur cluster binding"/>
    <property type="evidence" value="ECO:0007669"/>
    <property type="project" value="UniProtKB-KW"/>
</dbReference>
<dbReference type="GO" id="GO:0020037">
    <property type="term" value="F:heme binding"/>
    <property type="evidence" value="ECO:0007669"/>
    <property type="project" value="InterPro"/>
</dbReference>
<dbReference type="GO" id="GO:0046872">
    <property type="term" value="F:metal ion binding"/>
    <property type="evidence" value="ECO:0007669"/>
    <property type="project" value="UniProtKB-KW"/>
</dbReference>
<dbReference type="GO" id="GO:0050311">
    <property type="term" value="F:sulfite reductase (ferredoxin) activity"/>
    <property type="evidence" value="ECO:0007669"/>
    <property type="project" value="TreeGrafter"/>
</dbReference>
<dbReference type="GO" id="GO:0016002">
    <property type="term" value="F:sulfite reductase activity"/>
    <property type="evidence" value="ECO:0007669"/>
    <property type="project" value="TreeGrafter"/>
</dbReference>
<dbReference type="GO" id="GO:0000103">
    <property type="term" value="P:sulfate assimilation"/>
    <property type="evidence" value="ECO:0007669"/>
    <property type="project" value="TreeGrafter"/>
</dbReference>
<dbReference type="FunFam" id="3.30.70.20:FF:000033">
    <property type="entry name" value="Anaerobic sulfite reductase subunit AsrC"/>
    <property type="match status" value="1"/>
</dbReference>
<dbReference type="Gene3D" id="3.30.70.20">
    <property type="match status" value="1"/>
</dbReference>
<dbReference type="Gene3D" id="3.90.480.20">
    <property type="match status" value="1"/>
</dbReference>
<dbReference type="Gene3D" id="3.30.413.10">
    <property type="entry name" value="Sulfite Reductase Hemoprotein, domain 1"/>
    <property type="match status" value="1"/>
</dbReference>
<dbReference type="InterPro" id="IPR017896">
    <property type="entry name" value="4Fe4S_Fe-S-bd"/>
</dbReference>
<dbReference type="InterPro" id="IPR017900">
    <property type="entry name" value="4Fe4S_Fe_S_CS"/>
</dbReference>
<dbReference type="InterPro" id="IPR005117">
    <property type="entry name" value="NiRdtase/SiRdtase_haem-b_fer"/>
</dbReference>
<dbReference type="InterPro" id="IPR036136">
    <property type="entry name" value="Nit/Sulf_reduc_fer-like_dom_sf"/>
</dbReference>
<dbReference type="InterPro" id="IPR006067">
    <property type="entry name" value="NO2/SO3_Rdtase_4Fe4S_dom"/>
</dbReference>
<dbReference type="InterPro" id="IPR045169">
    <property type="entry name" value="NO2/SO3_Rdtase_4Fe4S_prot"/>
</dbReference>
<dbReference type="InterPro" id="IPR045854">
    <property type="entry name" value="NO2/SO3_Rdtase_4Fe4S_sf"/>
</dbReference>
<dbReference type="InterPro" id="IPR006066">
    <property type="entry name" value="NO2/SO3_Rdtase_FeS/sirohaem_BS"/>
</dbReference>
<dbReference type="InterPro" id="IPR014261">
    <property type="entry name" value="Sulphite_reductase_C"/>
</dbReference>
<dbReference type="NCBIfam" id="TIGR02912">
    <property type="entry name" value="sulfite_red_C"/>
    <property type="match status" value="1"/>
</dbReference>
<dbReference type="PANTHER" id="PTHR11493:SF54">
    <property type="entry name" value="ANAEROBIC SULFITE REDUCTASE SUBUNIT C"/>
    <property type="match status" value="1"/>
</dbReference>
<dbReference type="PANTHER" id="PTHR11493">
    <property type="entry name" value="SULFITE REDUCTASE [NADPH] SUBUNIT BETA-RELATED"/>
    <property type="match status" value="1"/>
</dbReference>
<dbReference type="Pfam" id="PF13237">
    <property type="entry name" value="Fer4_10"/>
    <property type="match status" value="1"/>
</dbReference>
<dbReference type="Pfam" id="PF01077">
    <property type="entry name" value="NIR_SIR"/>
    <property type="match status" value="1"/>
</dbReference>
<dbReference type="Pfam" id="PF03460">
    <property type="entry name" value="NIR_SIR_ferr"/>
    <property type="match status" value="1"/>
</dbReference>
<dbReference type="PRINTS" id="PR00397">
    <property type="entry name" value="SIROHAEM"/>
</dbReference>
<dbReference type="SUPFAM" id="SSF54862">
    <property type="entry name" value="4Fe-4S ferredoxins"/>
    <property type="match status" value="1"/>
</dbReference>
<dbReference type="SUPFAM" id="SSF56014">
    <property type="entry name" value="Nitrite and sulphite reductase 4Fe-4S domain-like"/>
    <property type="match status" value="1"/>
</dbReference>
<dbReference type="SUPFAM" id="SSF55124">
    <property type="entry name" value="Nitrite/Sulfite reductase N-terminal domain-like"/>
    <property type="match status" value="1"/>
</dbReference>
<dbReference type="PROSITE" id="PS00198">
    <property type="entry name" value="4FE4S_FER_1"/>
    <property type="match status" value="1"/>
</dbReference>
<dbReference type="PROSITE" id="PS51379">
    <property type="entry name" value="4FE4S_FER_2"/>
    <property type="match status" value="2"/>
</dbReference>
<dbReference type="PROSITE" id="PS00365">
    <property type="entry name" value="NIR_SIR"/>
    <property type="match status" value="1"/>
</dbReference>
<sequence length="337" mass="37291">MSIDIDIIKARAKNEYRLSKVRGEAMISVRIPGGILPAHLLTVARDIAETWGNGQIHLTTRQKLAMPGIRYEDIDNVNAALEPFLREIEIELCDVQVEDTKAGYLAIGGRNIVACQGNRICQKANTDTTGLSRRLEKLVYPSPYHLKTVIVGCPNDCAKASMADLGIIGVAKMRFTADRCIGCGACVKACSHHAVGCLALKNGKAVKEESACIGCGECVLACPTLAWQRKPDQLWQVRLGGRTSKKTPRVGKLFLNWVTEDVIKQVIVNLYEFEKEMLGGKPIYLHMGHLIDKGGYLRFKERVLRGVQLNPEAMVAERIYWAEDESVARMHLKPAGH</sequence>
<reference key="1">
    <citation type="journal article" date="2001" name="Nature">
        <title>Complete genome sequence of a multiple drug resistant Salmonella enterica serovar Typhi CT18.</title>
        <authorList>
            <person name="Parkhill J."/>
            <person name="Dougan G."/>
            <person name="James K.D."/>
            <person name="Thomson N.R."/>
            <person name="Pickard D."/>
            <person name="Wain J."/>
            <person name="Churcher C.M."/>
            <person name="Mungall K.L."/>
            <person name="Bentley S.D."/>
            <person name="Holden M.T.G."/>
            <person name="Sebaihia M."/>
            <person name="Baker S."/>
            <person name="Basham D."/>
            <person name="Brooks K."/>
            <person name="Chillingworth T."/>
            <person name="Connerton P."/>
            <person name="Cronin A."/>
            <person name="Davis P."/>
            <person name="Davies R.M."/>
            <person name="Dowd L."/>
            <person name="White N."/>
            <person name="Farrar J."/>
            <person name="Feltwell T."/>
            <person name="Hamlin N."/>
            <person name="Haque A."/>
            <person name="Hien T.T."/>
            <person name="Holroyd S."/>
            <person name="Jagels K."/>
            <person name="Krogh A."/>
            <person name="Larsen T.S."/>
            <person name="Leather S."/>
            <person name="Moule S."/>
            <person name="O'Gaora P."/>
            <person name="Parry C."/>
            <person name="Quail M.A."/>
            <person name="Rutherford K.M."/>
            <person name="Simmonds M."/>
            <person name="Skelton J."/>
            <person name="Stevens K."/>
            <person name="Whitehead S."/>
            <person name="Barrell B.G."/>
        </authorList>
    </citation>
    <scope>NUCLEOTIDE SEQUENCE [LARGE SCALE GENOMIC DNA]</scope>
    <source>
        <strain>CT18</strain>
    </source>
</reference>
<reference key="2">
    <citation type="journal article" date="2003" name="J. Bacteriol.">
        <title>Comparative genomics of Salmonella enterica serovar Typhi strains Ty2 and CT18.</title>
        <authorList>
            <person name="Deng W."/>
            <person name="Liou S.-R."/>
            <person name="Plunkett G. III"/>
            <person name="Mayhew G.F."/>
            <person name="Rose D.J."/>
            <person name="Burland V."/>
            <person name="Kodoyianni V."/>
            <person name="Schwartz D.C."/>
            <person name="Blattner F.R."/>
        </authorList>
    </citation>
    <scope>NUCLEOTIDE SEQUENCE [LARGE SCALE GENOMIC DNA]</scope>
    <source>
        <strain>ATCC 700931 / Ty2</strain>
    </source>
</reference>
<keyword id="KW-0004">4Fe-4S</keyword>
<keyword id="KW-0963">Cytoplasm</keyword>
<keyword id="KW-0249">Electron transport</keyword>
<keyword id="KW-0349">Heme</keyword>
<keyword id="KW-0408">Iron</keyword>
<keyword id="KW-0411">Iron-sulfur</keyword>
<keyword id="KW-0479">Metal-binding</keyword>
<keyword id="KW-0520">NAD</keyword>
<keyword id="KW-0560">Oxidoreductase</keyword>
<keyword id="KW-0677">Repeat</keyword>
<keyword id="KW-0813">Transport</keyword>
<name>ASRC_SALTI</name>
<organism>
    <name type="scientific">Salmonella typhi</name>
    <dbReference type="NCBI Taxonomy" id="90370"/>
    <lineage>
        <taxon>Bacteria</taxon>
        <taxon>Pseudomonadati</taxon>
        <taxon>Pseudomonadota</taxon>
        <taxon>Gammaproteobacteria</taxon>
        <taxon>Enterobacterales</taxon>
        <taxon>Enterobacteriaceae</taxon>
        <taxon>Salmonella</taxon>
    </lineage>
</organism>
<proteinExistence type="inferred from homology"/>
<gene>
    <name type="primary">asrC</name>
    <name type="ordered locus">STY2796</name>
    <name type="ordered locus">t0306</name>
</gene>
<evidence type="ECO:0000250" key="1"/>
<evidence type="ECO:0000255" key="2">
    <source>
        <dbReference type="PROSITE-ProRule" id="PRU00711"/>
    </source>
</evidence>
<evidence type="ECO:0000305" key="3"/>
<accession>P0A1Y3</accession>
<accession>P26476</accession>
<comment type="function">
    <text evidence="1">This enzyme catalyzes the hydrogen sulfide production from sulfite. It is strictly anaerobic. It is regulated by electron acceptors rather than by cysteine (By similarity).</text>
</comment>
<comment type="catalytic activity">
    <reaction>
        <text>hydrogen sulfide + 3 NAD(+) + 3 H2O = sulfite + 3 NADH + 4 H(+)</text>
        <dbReference type="Rhea" id="RHEA:55316"/>
        <dbReference type="ChEBI" id="CHEBI:15377"/>
        <dbReference type="ChEBI" id="CHEBI:15378"/>
        <dbReference type="ChEBI" id="CHEBI:17359"/>
        <dbReference type="ChEBI" id="CHEBI:29919"/>
        <dbReference type="ChEBI" id="CHEBI:57540"/>
        <dbReference type="ChEBI" id="CHEBI:57945"/>
    </reaction>
</comment>
<comment type="cofactor">
    <cofactor evidence="1">
        <name>[4Fe-4S] cluster</name>
        <dbReference type="ChEBI" id="CHEBI:49883"/>
    </cofactor>
    <text evidence="1">Binds 3 [4Fe-4S] clusters per subunit.</text>
</comment>
<comment type="cofactor">
    <cofactor evidence="1">
        <name>siroheme</name>
        <dbReference type="ChEBI" id="CHEBI:60052"/>
    </cofactor>
    <text evidence="1">Binds 1 siroheme per subunit.</text>
</comment>
<comment type="pathway">
    <text>Sulfur metabolism; sulfite reduction.</text>
</comment>
<comment type="subunit">
    <text evidence="1">The anaerobic sulfite reductase seems to consist of three subunits.</text>
</comment>
<comment type="subcellular location">
    <subcellularLocation>
        <location evidence="1">Cytoplasm</location>
    </subcellularLocation>
</comment>
<comment type="similarity">
    <text evidence="3">Belongs to the nitrite and sulfite reductase 4Fe-4S domain family.</text>
</comment>
<protein>
    <recommendedName>
        <fullName>Anaerobic sulfite reductase subunit C</fullName>
        <ecNumber>1.8.1.-</ecNumber>
    </recommendedName>
</protein>
<feature type="chain" id="PRO_0000199964" description="Anaerobic sulfite reductase subunit C">
    <location>
        <begin position="1"/>
        <end position="337"/>
    </location>
</feature>
<feature type="domain" description="4Fe-4S ferredoxin-type 1" evidence="2">
    <location>
        <begin position="171"/>
        <end position="200"/>
    </location>
</feature>
<feature type="domain" description="4Fe-4S ferredoxin-type 2" evidence="2">
    <location>
        <begin position="203"/>
        <end position="232"/>
    </location>
</feature>
<feature type="binding site" evidence="1">
    <location>
        <position position="115"/>
    </location>
    <ligand>
        <name>[4Fe-4S] cluster</name>
        <dbReference type="ChEBI" id="CHEBI:49883"/>
        <label>1</label>
    </ligand>
</feature>
<feature type="binding site" evidence="1">
    <location>
        <position position="121"/>
    </location>
    <ligand>
        <name>[4Fe-4S] cluster</name>
        <dbReference type="ChEBI" id="CHEBI:49883"/>
        <label>1</label>
    </ligand>
</feature>
<feature type="binding site" evidence="1">
    <location>
        <position position="153"/>
    </location>
    <ligand>
        <name>[4Fe-4S] cluster</name>
        <dbReference type="ChEBI" id="CHEBI:49883"/>
        <label>1</label>
    </ligand>
</feature>
<feature type="binding site" evidence="1">
    <location>
        <position position="157"/>
    </location>
    <ligand>
        <name>[4Fe-4S] cluster</name>
        <dbReference type="ChEBI" id="CHEBI:49883"/>
        <label>1</label>
    </ligand>
</feature>
<feature type="binding site" description="axial binding residue" evidence="1">
    <location>
        <position position="157"/>
    </location>
    <ligand>
        <name>siroheme</name>
        <dbReference type="ChEBI" id="CHEBI:60052"/>
    </ligand>
    <ligandPart>
        <name>Fe</name>
        <dbReference type="ChEBI" id="CHEBI:18248"/>
    </ligandPart>
</feature>
<feature type="binding site" evidence="1">
    <location>
        <position position="180"/>
    </location>
    <ligand>
        <name>[4Fe-4S] cluster</name>
        <dbReference type="ChEBI" id="CHEBI:49883"/>
        <label>2</label>
    </ligand>
</feature>
<feature type="binding site" evidence="1">
    <location>
        <position position="183"/>
    </location>
    <ligand>
        <name>[4Fe-4S] cluster</name>
        <dbReference type="ChEBI" id="CHEBI:49883"/>
        <label>2</label>
    </ligand>
</feature>
<feature type="binding site" evidence="1">
    <location>
        <position position="186"/>
    </location>
    <ligand>
        <name>[4Fe-4S] cluster</name>
        <dbReference type="ChEBI" id="CHEBI:49883"/>
        <label>2</label>
    </ligand>
</feature>
<feature type="binding site" evidence="1">
    <location>
        <position position="190"/>
    </location>
    <ligand>
        <name>[4Fe-4S] cluster</name>
        <dbReference type="ChEBI" id="CHEBI:49883"/>
        <label>3</label>
    </ligand>
</feature>
<feature type="binding site" evidence="1">
    <location>
        <position position="212"/>
    </location>
    <ligand>
        <name>[4Fe-4S] cluster</name>
        <dbReference type="ChEBI" id="CHEBI:49883"/>
        <label>3</label>
    </ligand>
</feature>
<feature type="binding site" evidence="1">
    <location>
        <position position="215"/>
    </location>
    <ligand>
        <name>[4Fe-4S] cluster</name>
        <dbReference type="ChEBI" id="CHEBI:49883"/>
        <label>3</label>
    </ligand>
</feature>
<feature type="binding site" evidence="1">
    <location>
        <position position="218"/>
    </location>
    <ligand>
        <name>[4Fe-4S] cluster</name>
        <dbReference type="ChEBI" id="CHEBI:49883"/>
        <label>3</label>
    </ligand>
</feature>
<feature type="binding site" evidence="1">
    <location>
        <position position="222"/>
    </location>
    <ligand>
        <name>[4Fe-4S] cluster</name>
        <dbReference type="ChEBI" id="CHEBI:49883"/>
        <label>2</label>
    </ligand>
</feature>